<sequence>MKIIFNADDFGISPGAVYGILESYKKGVVKSTTLLANSPAFDLAVEVAKENPGLDIGAHLTLTFGSPLLQGLETLTDDDGRFRKNYTALENGLADVDMGEVERELTAQIKKILGAGLTISHFDTHHSIEPLIYPIQHKLAEKYGVSIRRHADVSDFGAIKTPDLFETAFYADGVSFETIKKIVQAHIGTNDVVEVMTHPAFIDETLREISSYVEPRIKEVSILTSRELQAYLGQQEVEVISFRDL</sequence>
<proteinExistence type="inferred from homology"/>
<gene>
    <name type="ordered locus">lwe0160</name>
</gene>
<protein>
    <recommendedName>
        <fullName evidence="1">Carbohydrate deacetylase</fullName>
        <ecNumber evidence="1">3.5.1.-</ecNumber>
    </recommendedName>
</protein>
<feature type="chain" id="PRO_1000067085" description="Carbohydrate deacetylase">
    <location>
        <begin position="1"/>
        <end position="245"/>
    </location>
</feature>
<feature type="binding site" evidence="1">
    <location>
        <position position="59"/>
    </location>
    <ligand>
        <name>Mg(2+)</name>
        <dbReference type="ChEBI" id="CHEBI:18420"/>
    </ligand>
</feature>
<feature type="binding site" evidence="1">
    <location>
        <position position="125"/>
    </location>
    <ligand>
        <name>Mg(2+)</name>
        <dbReference type="ChEBI" id="CHEBI:18420"/>
    </ligand>
</feature>
<comment type="function">
    <text evidence="1">Probably catalyzes the deacetylation of acetylated carbohydrates an important step in the degradation of oligosaccharides.</text>
</comment>
<comment type="cofactor">
    <cofactor evidence="1">
        <name>Mg(2+)</name>
        <dbReference type="ChEBI" id="CHEBI:18420"/>
    </cofactor>
</comment>
<comment type="subunit">
    <text evidence="1">Homodimer.</text>
</comment>
<comment type="similarity">
    <text evidence="1">Belongs to the YdjC deacetylase family.</text>
</comment>
<reference key="1">
    <citation type="journal article" date="2006" name="J. Bacteriol.">
        <title>Whole-genome sequence of Listeria welshimeri reveals common steps in genome reduction with Listeria innocua as compared to Listeria monocytogenes.</title>
        <authorList>
            <person name="Hain T."/>
            <person name="Steinweg C."/>
            <person name="Kuenne C.T."/>
            <person name="Billion A."/>
            <person name="Ghai R."/>
            <person name="Chatterjee S.S."/>
            <person name="Domann E."/>
            <person name="Kaerst U."/>
            <person name="Goesmann A."/>
            <person name="Bekel T."/>
            <person name="Bartels D."/>
            <person name="Kaiser O."/>
            <person name="Meyer F."/>
            <person name="Puehler A."/>
            <person name="Weisshaar B."/>
            <person name="Wehland J."/>
            <person name="Liang C."/>
            <person name="Dandekar T."/>
            <person name="Lampidis R."/>
            <person name="Kreft J."/>
            <person name="Goebel W."/>
            <person name="Chakraborty T."/>
        </authorList>
    </citation>
    <scope>NUCLEOTIDE SEQUENCE [LARGE SCALE GENOMIC DNA]</scope>
    <source>
        <strain>ATCC 35897 / DSM 20650 / CCUG 15529 / CIP 8149 / NCTC 11857 / SLCC 5334 / V8</strain>
    </source>
</reference>
<evidence type="ECO:0000255" key="1">
    <source>
        <dbReference type="HAMAP-Rule" id="MF_01246"/>
    </source>
</evidence>
<accession>A0AEZ6</accession>
<keyword id="KW-0119">Carbohydrate metabolism</keyword>
<keyword id="KW-0378">Hydrolase</keyword>
<keyword id="KW-0460">Magnesium</keyword>
<keyword id="KW-0479">Metal-binding</keyword>
<name>YDJC_LISW6</name>
<organism>
    <name type="scientific">Listeria welshimeri serovar 6b (strain ATCC 35897 / DSM 20650 / CCUG 15529 / CIP 8149 / NCTC 11857 / SLCC 5334 / V8)</name>
    <dbReference type="NCBI Taxonomy" id="386043"/>
    <lineage>
        <taxon>Bacteria</taxon>
        <taxon>Bacillati</taxon>
        <taxon>Bacillota</taxon>
        <taxon>Bacilli</taxon>
        <taxon>Bacillales</taxon>
        <taxon>Listeriaceae</taxon>
        <taxon>Listeria</taxon>
    </lineage>
</organism>
<dbReference type="EC" id="3.5.1.-" evidence="1"/>
<dbReference type="EMBL" id="AM263198">
    <property type="protein sequence ID" value="CAK19578.1"/>
    <property type="molecule type" value="Genomic_DNA"/>
</dbReference>
<dbReference type="RefSeq" id="WP_011701028.1">
    <property type="nucleotide sequence ID" value="NC_008555.1"/>
</dbReference>
<dbReference type="SMR" id="A0AEZ6"/>
<dbReference type="STRING" id="386043.lwe0160"/>
<dbReference type="GeneID" id="61188040"/>
<dbReference type="KEGG" id="lwe:lwe0160"/>
<dbReference type="eggNOG" id="COG3394">
    <property type="taxonomic scope" value="Bacteria"/>
</dbReference>
<dbReference type="HOGENOM" id="CLU_064244_4_0_9"/>
<dbReference type="OrthoDB" id="9774177at2"/>
<dbReference type="Proteomes" id="UP000000779">
    <property type="component" value="Chromosome"/>
</dbReference>
<dbReference type="GO" id="GO:0019213">
    <property type="term" value="F:deacetylase activity"/>
    <property type="evidence" value="ECO:0007669"/>
    <property type="project" value="TreeGrafter"/>
</dbReference>
<dbReference type="GO" id="GO:0016811">
    <property type="term" value="F:hydrolase activity, acting on carbon-nitrogen (but not peptide) bonds, in linear amides"/>
    <property type="evidence" value="ECO:0007669"/>
    <property type="project" value="UniProtKB-UniRule"/>
</dbReference>
<dbReference type="GO" id="GO:0046872">
    <property type="term" value="F:metal ion binding"/>
    <property type="evidence" value="ECO:0007669"/>
    <property type="project" value="UniProtKB-KW"/>
</dbReference>
<dbReference type="GO" id="GO:0000272">
    <property type="term" value="P:polysaccharide catabolic process"/>
    <property type="evidence" value="ECO:0007669"/>
    <property type="project" value="InterPro"/>
</dbReference>
<dbReference type="CDD" id="cd10803">
    <property type="entry name" value="YdjC_EF3048_like"/>
    <property type="match status" value="1"/>
</dbReference>
<dbReference type="Gene3D" id="3.20.20.370">
    <property type="entry name" value="Glycoside hydrolase/deacetylase"/>
    <property type="match status" value="1"/>
</dbReference>
<dbReference type="HAMAP" id="MF_01246">
    <property type="entry name" value="COD"/>
    <property type="match status" value="1"/>
</dbReference>
<dbReference type="InterPro" id="IPR022948">
    <property type="entry name" value="COD_ChbG_bac"/>
</dbReference>
<dbReference type="InterPro" id="IPR011330">
    <property type="entry name" value="Glyco_hydro/deAcase_b/a-brl"/>
</dbReference>
<dbReference type="InterPro" id="IPR006879">
    <property type="entry name" value="YdjC-like"/>
</dbReference>
<dbReference type="NCBIfam" id="NF002559">
    <property type="entry name" value="PRK02134.1"/>
    <property type="match status" value="1"/>
</dbReference>
<dbReference type="PANTHER" id="PTHR31609:SF1">
    <property type="entry name" value="CARBOHYDRATE DEACETYLASE"/>
    <property type="match status" value="1"/>
</dbReference>
<dbReference type="PANTHER" id="PTHR31609">
    <property type="entry name" value="YDJC DEACETYLASE FAMILY MEMBER"/>
    <property type="match status" value="1"/>
</dbReference>
<dbReference type="Pfam" id="PF04794">
    <property type="entry name" value="YdjC"/>
    <property type="match status" value="1"/>
</dbReference>
<dbReference type="SUPFAM" id="SSF88713">
    <property type="entry name" value="Glycoside hydrolase/deacetylase"/>
    <property type="match status" value="1"/>
</dbReference>